<accession>P50747</accession>
<accession>B2RAH1</accession>
<accession>D3DSG6</accession>
<accession>Q99451</accession>
<sequence length="726" mass="80760">MEDRLHMDNGLVPQKIVSVHLQDSTLKEVKDQVSNKQAQILEPKPEPSLEIKPEQDGMEHVGRDDPKALGEEPKQRRGSASGSEPAGDSDRGGGPVEHYHLHLSSCHECLELENSTIESVKFASAENIPDLPYDYSSSLESVADETSPEREGRRVNLTGKAPNILLYVGSDSQEALGRFHEVRSVLADCVDIDSYILYHLLEDSALRDPWTDNCLLLVIATRESIPEDLYQKFMAYLSQGGKVLGLSSSFTFGGFQVTSKGALHKTVQNLVFSKADQSEVKLSVLSSGCRYQEGPVRLSPGRLQGHLENEDKDRMIVHVPFGTRGGEAVLCQVHLELPPSSNIVQTPEDFNLLKSSNFRRYEVLREILTTLGLSCDMKQVPALTPLYLLSAAEEIRDPLMQWLGKHVDSEGEIKSGQLSLRFVSSYVSEVEITPSCIPVVTNMEAFSSEHFNLEIYRQNLQTKQLGKVILFAEVTPTTMRLLDGLMFQTPQEMGLIVIAARQTEGKGRGGNVWLSPVGCALSTLLISIPLRSQLGQRIPFVQHLMSVAVVEAVRSIPEYQDINLRVKWPNDIYYSDLMKIGGVLVNSTLMGETFYILIGCGFNVTNSNPTICINDLITEYNKQHKAELKPLRADYLIARVVTVLEKLIKEFQDKGPNSVLPLYYRYWVHSGQQVHLGSAEGPKVSIVGLDDSGFLQVHQEGGEVVTVHPDGNSFDMLRNLILPKRR</sequence>
<protein>
    <recommendedName>
        <fullName>Biotin--protein ligase</fullName>
        <ecNumber evidence="19">6.3.4.-</ecNumber>
    </recommendedName>
    <alternativeName>
        <fullName>Biotin apo-protein ligase</fullName>
    </alternativeName>
    <domain>
        <recommendedName>
            <fullName>Biotin--[methylmalonyl-CoA-carboxytransferase] ligase</fullName>
            <ecNumber evidence="19">6.3.4.9</ecNumber>
        </recommendedName>
    </domain>
    <domain>
        <recommendedName>
            <fullName>Biotin--[propionyl-CoA-carboxylase [ATP-hydrolyzing]] ligase</fullName>
            <ecNumber evidence="13">6.3.4.10</ecNumber>
        </recommendedName>
        <alternativeName>
            <fullName>Holocarboxylase synthetase</fullName>
            <shortName>HCS</shortName>
        </alternativeName>
    </domain>
    <domain>
        <recommendedName>
            <fullName>Biotin--[methylcrotonoyl-CoA-carboxylase] ligase</fullName>
            <ecNumber evidence="19">6.3.4.11</ecNumber>
        </recommendedName>
    </domain>
    <domain>
        <recommendedName>
            <fullName>Biotin--[acetyl-CoA-carboxylase] ligase</fullName>
            <ecNumber evidence="19">6.3.4.15</ecNumber>
        </recommendedName>
    </domain>
</protein>
<keyword id="KW-0025">Alternative splicing</keyword>
<keyword id="KW-0067">ATP-binding</keyword>
<keyword id="KW-0963">Cytoplasm</keyword>
<keyword id="KW-0225">Disease variant</keyword>
<keyword id="KW-0436">Ligase</keyword>
<keyword id="KW-0496">Mitochondrion</keyword>
<keyword id="KW-0511">Multifunctional enzyme</keyword>
<keyword id="KW-0547">Nucleotide-binding</keyword>
<keyword id="KW-0597">Phosphoprotein</keyword>
<keyword id="KW-1267">Proteomics identification</keyword>
<keyword id="KW-1185">Reference proteome</keyword>
<evidence type="ECO:0000255" key="1">
    <source>
        <dbReference type="PROSITE-ProRule" id="PRU01067"/>
    </source>
</evidence>
<evidence type="ECO:0000256" key="2">
    <source>
        <dbReference type="SAM" id="MobiDB-lite"/>
    </source>
</evidence>
<evidence type="ECO:0000269" key="3">
    <source>
    </source>
</evidence>
<evidence type="ECO:0000269" key="4">
    <source>
    </source>
</evidence>
<evidence type="ECO:0000269" key="5">
    <source>
    </source>
</evidence>
<evidence type="ECO:0000269" key="6">
    <source>
    </source>
</evidence>
<evidence type="ECO:0000269" key="7">
    <source>
    </source>
</evidence>
<evidence type="ECO:0000269" key="8">
    <source>
    </source>
</evidence>
<evidence type="ECO:0000269" key="9">
    <source>
    </source>
</evidence>
<evidence type="ECO:0000269" key="10">
    <source>
    </source>
</evidence>
<evidence type="ECO:0000269" key="11">
    <source>
    </source>
</evidence>
<evidence type="ECO:0000269" key="12">
    <source>
    </source>
</evidence>
<evidence type="ECO:0000269" key="13">
    <source>
    </source>
</evidence>
<evidence type="ECO:0000269" key="14">
    <source>
    </source>
</evidence>
<evidence type="ECO:0000269" key="15">
    <source>
    </source>
</evidence>
<evidence type="ECO:0000269" key="16">
    <source>
    </source>
</evidence>
<evidence type="ECO:0000269" key="17">
    <source>
    </source>
</evidence>
<evidence type="ECO:0000305" key="18"/>
<evidence type="ECO:0000305" key="19">
    <source>
    </source>
</evidence>
<evidence type="ECO:0000305" key="20">
    <source>
    </source>
</evidence>
<evidence type="ECO:0000312" key="21">
    <source>
        <dbReference type="HGNC" id="HGNC:4976"/>
    </source>
</evidence>
<evidence type="ECO:0007744" key="22">
    <source>
    </source>
</evidence>
<evidence type="ECO:0007744" key="23">
    <source>
    </source>
</evidence>
<organism>
    <name type="scientific">Homo sapiens</name>
    <name type="common">Human</name>
    <dbReference type="NCBI Taxonomy" id="9606"/>
    <lineage>
        <taxon>Eukaryota</taxon>
        <taxon>Metazoa</taxon>
        <taxon>Chordata</taxon>
        <taxon>Craniata</taxon>
        <taxon>Vertebrata</taxon>
        <taxon>Euteleostomi</taxon>
        <taxon>Mammalia</taxon>
        <taxon>Eutheria</taxon>
        <taxon>Euarchontoglires</taxon>
        <taxon>Primates</taxon>
        <taxon>Haplorrhini</taxon>
        <taxon>Catarrhini</taxon>
        <taxon>Hominidae</taxon>
        <taxon>Homo</taxon>
    </lineage>
</organism>
<comment type="function">
    <text evidence="4 13 14">Biotin--protein ligase catalyzing the biotinylation of the 4 biotin-dependent carboxylases acetyl-CoA-carboxylase, pyruvate carboxylase, propionyl-CoA carboxylase, and methylcrotonyl-CoA carboxylase.</text>
</comment>
<comment type="catalytic activity">
    <reaction evidence="19">
        <text>apo-[methylmalonyl-CoA:pyruvate carboxytransferase] + biotin + ATP = holo-[methylmalonyl-CoA:pyruvate carboxytransferase] + AMP + diphosphate + H(+)</text>
        <dbReference type="Rhea" id="RHEA:23668"/>
        <dbReference type="Rhea" id="RHEA-COMP:10508"/>
        <dbReference type="Rhea" id="RHEA-COMP:10509"/>
        <dbReference type="ChEBI" id="CHEBI:15378"/>
        <dbReference type="ChEBI" id="CHEBI:29969"/>
        <dbReference type="ChEBI" id="CHEBI:30616"/>
        <dbReference type="ChEBI" id="CHEBI:33019"/>
        <dbReference type="ChEBI" id="CHEBI:57586"/>
        <dbReference type="ChEBI" id="CHEBI:83144"/>
        <dbReference type="ChEBI" id="CHEBI:456215"/>
        <dbReference type="EC" id="6.3.4.9"/>
    </reaction>
    <physiologicalReaction direction="left-to-right" evidence="19">
        <dbReference type="Rhea" id="RHEA:23669"/>
    </physiologicalReaction>
</comment>
<comment type="catalytic activity">
    <reaction evidence="13">
        <text>apo-[propionyl-CoA:carbon-dioxide ligase (ADP-forming)] + biotin + ATP = holo-[propionyl-CoA:carbon-dioxide ligase (ADP-forming)] + AMP + diphosphate + H(+)</text>
        <dbReference type="Rhea" id="RHEA:11204"/>
        <dbReference type="Rhea" id="RHEA-COMP:10511"/>
        <dbReference type="Rhea" id="RHEA-COMP:10512"/>
        <dbReference type="ChEBI" id="CHEBI:15378"/>
        <dbReference type="ChEBI" id="CHEBI:29969"/>
        <dbReference type="ChEBI" id="CHEBI:30616"/>
        <dbReference type="ChEBI" id="CHEBI:33019"/>
        <dbReference type="ChEBI" id="CHEBI:57586"/>
        <dbReference type="ChEBI" id="CHEBI:83144"/>
        <dbReference type="ChEBI" id="CHEBI:456215"/>
        <dbReference type="EC" id="6.3.4.10"/>
    </reaction>
    <physiologicalReaction direction="left-to-right" evidence="13">
        <dbReference type="Rhea" id="RHEA:11205"/>
    </physiologicalReaction>
</comment>
<comment type="catalytic activity">
    <reaction evidence="19">
        <text>apo-[3-methylcrotonoyl-CoA:carbon-dioxide ligase (ADP-forming)] + biotin + ATP = holo-[3-methylcrotonoyl-CoA:carbon-dioxide ligase (ADP-forming)] + AMP + diphosphate + H(+)</text>
        <dbReference type="Rhea" id="RHEA:24376"/>
        <dbReference type="Rhea" id="RHEA-COMP:10514"/>
        <dbReference type="Rhea" id="RHEA-COMP:10515"/>
        <dbReference type="ChEBI" id="CHEBI:15378"/>
        <dbReference type="ChEBI" id="CHEBI:29969"/>
        <dbReference type="ChEBI" id="CHEBI:30616"/>
        <dbReference type="ChEBI" id="CHEBI:33019"/>
        <dbReference type="ChEBI" id="CHEBI:57586"/>
        <dbReference type="ChEBI" id="CHEBI:83144"/>
        <dbReference type="ChEBI" id="CHEBI:456215"/>
        <dbReference type="EC" id="6.3.4.11"/>
    </reaction>
    <physiologicalReaction direction="left-to-right" evidence="13">
        <dbReference type="Rhea" id="RHEA:24377"/>
    </physiologicalReaction>
</comment>
<comment type="catalytic activity">
    <reaction evidence="19">
        <text>biotin + L-lysyl-[protein] + ATP = N(6)-biotinyl-L-lysyl-[protein] + AMP + diphosphate + H(+)</text>
        <dbReference type="Rhea" id="RHEA:11756"/>
        <dbReference type="Rhea" id="RHEA-COMP:9752"/>
        <dbReference type="Rhea" id="RHEA-COMP:10505"/>
        <dbReference type="ChEBI" id="CHEBI:15378"/>
        <dbReference type="ChEBI" id="CHEBI:29969"/>
        <dbReference type="ChEBI" id="CHEBI:30616"/>
        <dbReference type="ChEBI" id="CHEBI:33019"/>
        <dbReference type="ChEBI" id="CHEBI:57586"/>
        <dbReference type="ChEBI" id="CHEBI:83144"/>
        <dbReference type="ChEBI" id="CHEBI:456215"/>
        <dbReference type="EC" id="6.3.4.15"/>
    </reaction>
    <physiologicalReaction direction="left-to-right" evidence="13">
        <dbReference type="Rhea" id="RHEA:11757"/>
    </physiologicalReaction>
</comment>
<comment type="biophysicochemical properties">
    <kinetics>
        <KM evidence="4">224 nM for biotin</KM>
        <Vmax evidence="4">143.9 pmol/min/mg enzyme</Vmax>
    </kinetics>
</comment>
<comment type="subunit">
    <text evidence="20">Monomer.</text>
</comment>
<comment type="interaction">
    <interactant intactId="EBI-3915568">
        <id>P50747</id>
    </interactant>
    <interactant intactId="EBI-2211739">
        <id>O00763</id>
        <label>ACACB</label>
    </interactant>
    <organismsDiffer>false</organismsDiffer>
    <experiments>4</experiments>
</comment>
<comment type="interaction">
    <interactant intactId="EBI-3915568">
        <id>P50747</id>
    </interactant>
    <interactant intactId="EBI-17439331">
        <id>Q8N6D5</id>
        <label>ANKRD29</label>
    </interactant>
    <organismsDiffer>false</organismsDiffer>
    <experiments>3</experiments>
</comment>
<comment type="interaction">
    <interactant intactId="EBI-3915568">
        <id>P50747</id>
    </interactant>
    <interactant intactId="EBI-10260328">
        <id>Q86XM0</id>
        <label>CATSPERD</label>
    </interactant>
    <organismsDiffer>false</organismsDiffer>
    <experiments>2</experiments>
</comment>
<comment type="interaction">
    <interactant intactId="EBI-3915568">
        <id>P50747</id>
    </interactant>
    <interactant intactId="EBI-3958099">
        <id>P26371</id>
        <label>KRTAP5-9</label>
    </interactant>
    <organismsDiffer>false</organismsDiffer>
    <experiments>3</experiments>
</comment>
<comment type="interaction">
    <interactant intactId="EBI-3915568">
        <id>P50747</id>
    </interactant>
    <interactant intactId="EBI-13288755">
        <id>A0JLT2-2</id>
        <label>MED19</label>
    </interactant>
    <organismsDiffer>false</organismsDiffer>
    <experiments>3</experiments>
</comment>
<comment type="interaction">
    <interactant intactId="EBI-3915568">
        <id>P50747</id>
    </interactant>
    <interactant intactId="EBI-752420">
        <id>Q9NUX5</id>
        <label>POT1</label>
    </interactant>
    <organismsDiffer>false</organismsDiffer>
    <experiments>2</experiments>
</comment>
<comment type="interaction">
    <interactant intactId="EBI-3915568">
        <id>P50747</id>
    </interactant>
    <interactant intactId="EBI-750105">
        <id>Q5T0L3</id>
        <label>SPATA46</label>
    </interactant>
    <organismsDiffer>false</organismsDiffer>
    <experiments>6</experiments>
</comment>
<comment type="subcellular location">
    <subcellularLocation>
        <location evidence="20">Cytoplasm</location>
    </subcellularLocation>
    <subcellularLocation>
        <location evidence="20">Mitochondrion</location>
    </subcellularLocation>
</comment>
<comment type="alternative products">
    <event type="alternative splicing"/>
    <isoform>
        <id>P50747-1</id>
        <name>1</name>
        <sequence type="displayed"/>
    </isoform>
    <isoform>
        <id>P50747-2</id>
        <name>2</name>
        <sequence type="described" ref="VSP_061442"/>
    </isoform>
</comment>
<comment type="tissue specificity">
    <text evidence="13 14">Widely expressed (PubMed:7753853, PubMed:7842009). Mostly expressed in muscle, placenta and to a lower extent in the brain, kidney, pancreas, liver and lung (PubMed:7842009).</text>
</comment>
<comment type="disease" evidence="3 4 5 6 7 8 11 12 14 15 16 17">
    <disease id="DI-00565">
        <name>Holocarboxylase synthetase deficiency</name>
        <acronym>HLCS deficiency</acronym>
        <description>A neonatal form of multiple carboxylase deficiency, an autosomal recessive disorder of biotin metabolism, characterized by ketoacidosis, hyperammonemia, excretion of abnormal organic acid metabolites, and dermatitis. In holocarboxylase synthetase deficiency, clinical and biochemical symptoms improve dramatically with administration of biotin.</description>
        <dbReference type="MIM" id="253270"/>
    </disease>
    <text>The disease is caused by variants affecting the gene represented in this entry.</text>
</comment>
<comment type="similarity">
    <text evidence="18">Belongs to the biotin--protein ligase family.</text>
</comment>
<comment type="sequence caution" evidence="18">
    <conflict type="frameshift">
        <sequence resource="EMBL" id="AK307940"/>
    </conflict>
</comment>
<proteinExistence type="evidence at protein level"/>
<feature type="chain" id="PRO_0000064979" description="Biotin--protein ligase">
    <location>
        <begin position="1"/>
        <end position="726"/>
    </location>
</feature>
<feature type="domain" description="BPL/LPL catalytic" evidence="1">
    <location>
        <begin position="463"/>
        <end position="652"/>
    </location>
</feature>
<feature type="region of interest" description="Disordered" evidence="2">
    <location>
        <begin position="28"/>
        <end position="98"/>
    </location>
</feature>
<feature type="compositionally biased region" description="Basic and acidic residues" evidence="2">
    <location>
        <begin position="43"/>
        <end position="75"/>
    </location>
</feature>
<feature type="modified residue" description="Phosphoserine" evidence="22">
    <location>
        <position position="147"/>
    </location>
</feature>
<feature type="modified residue" description="Phosphoserine" evidence="23">
    <location>
        <position position="299"/>
    </location>
</feature>
<feature type="splice variant" id="VSP_061442" description="In isoform 2.">
    <original>M</original>
    <variation>MLITLCYLYLWARWGRRPAELVRATVRRLRASRCSFTFCGAAAQPPGARVCLSRGGRVFCVSDSQSIEDLNKWALFLVSPFILEAEHIAFVTESIWVQSENLQRSSSSETIVKWSDCCLPLACRPGDPYRLIAEASVDNFSKLGVAFM</variation>
    <location>
        <position position="1"/>
    </location>
</feature>
<feature type="sequence variant" id="VAR_035800" description="In HLCS deficiency; benign; conserves enzymatic wild-type activity; dbSNP:rs61732504." evidence="5 9">
    <original>E</original>
    <variation>D</variation>
    <location>
        <position position="42"/>
    </location>
</feature>
<feature type="sequence variant" id="VAR_046507" description="In HLCS deficiency; has normal or low KM values for biotin (non-KM mutant)." evidence="4">
    <original>R</original>
    <variation>P</variation>
    <location>
        <position position="183"/>
    </location>
</feature>
<feature type="sequence variant" id="VAR_021218" description="In HLCS deficiency; has normal or low KM values for biotin (non-KM mutant); growth of patients' fibroblasts is compromised compared with normal fibroblasts; patients cells are not sensitive to biotin-depletion from the media; growth rates cannot be restored by re-administration of biotin; enzyme activity is severely compromised and cannot be increased by additional biotin; turn-over rate for the mutant protein is double that of wild-type enzyme; dbSNP:rs28934602." evidence="4 6 10 16">
    <original>L</original>
    <variation>R</variation>
    <location>
        <position position="216"/>
    </location>
</feature>
<feature type="sequence variant" id="VAR_005084" description="In HLCS deficiency; has normal or low KM values for biotin (non-KM mutant); dbSNP:rs119103227." evidence="4 5 14 15 17">
    <original>L</original>
    <variation>P</variation>
    <location>
        <position position="237"/>
    </location>
</feature>
<feature type="sequence variant" id="VAR_073074" description="In HLCS deficiency." evidence="12">
    <original>G</original>
    <variation>W</variation>
    <location>
        <position position="241"/>
    </location>
</feature>
<feature type="sequence variant" id="VAR_009196" description="In HLCS deficiency; &lt;10% activity; has normal or low KM values for biotin (non-KM mutant); dbSNP:rs1198548955." evidence="3 4 5">
    <original>V</original>
    <variation>E</variation>
    <location>
        <position position="333"/>
    </location>
</feature>
<feature type="sequence variant" id="VAR_046508" description="In HLCS deficiency; 22% activity; shows elevated KM values for biotin (KM mutant) compared with that of the wild-type form; dbSNP:rs1230666123." evidence="5">
    <original>R</original>
    <variation>S</variation>
    <location>
        <position position="360"/>
    </location>
</feature>
<feature type="sequence variant" id="VAR_046509" description="In HLCS deficiency; has normal or low KM values for biotin (non-KM mutant); dbSNP:rs769499327." evidence="4 16">
    <original>V</original>
    <variation>D</variation>
    <location>
        <position position="363"/>
    </location>
</feature>
<feature type="sequence variant" id="VAR_046510" description="In HLCS deficiency; 0.2% activity; dbSNP:rs781603756." evidence="5">
    <original>Y</original>
    <variation>C</variation>
    <location>
        <position position="456"/>
    </location>
</feature>
<feature type="sequence variant" id="VAR_009197" description="In HLCS deficiency; &lt;10% activity; dbSNP:rs1256356959." evidence="3">
    <original>T</original>
    <variation>I</variation>
    <location>
        <position position="462"/>
    </location>
</feature>
<feature type="sequence variant" id="VAR_046511" description="In HLCS deficiency; 4.3% activity; dbSNP:rs1261821166." evidence="5">
    <original>L</original>
    <variation>S</variation>
    <location>
        <position position="470"/>
    </location>
</feature>
<feature type="sequence variant" id="VAR_073075" description="In HLCS deficiency; dbSNP:rs1555885056." evidence="11">
    <original>G</original>
    <variation>R</variation>
    <location>
        <position position="505"/>
    </location>
</feature>
<feature type="sequence variant" id="VAR_013009" description="In HLCS deficiency; dbSNP:rs119103229." evidence="5 7 11 16">
    <original>R</original>
    <variation>W</variation>
    <location>
        <position position="508"/>
    </location>
</feature>
<feature type="sequence variant" id="VAR_021219" description="In HLCS deficiency." evidence="6">
    <original>N</original>
    <variation>K</variation>
    <location>
        <position position="511"/>
    </location>
</feature>
<feature type="sequence variant" id="VAR_046512" description="In HLCS deficiency." evidence="16">
    <original>G</original>
    <variation>E</variation>
    <location>
        <position position="518"/>
    </location>
</feature>
<feature type="sequence variant" id="VAR_046513" description="In HLCS deficiency; 3.4% activity." evidence="5">
    <original>V</original>
    <variation>G</variation>
    <location>
        <position position="547"/>
    </location>
</feature>
<feature type="sequence variant" id="VAR_009198" description="In HLCS deficiency; dbSNP:rs119103231." evidence="5 7 16 17">
    <original>V</original>
    <variation>M</variation>
    <location>
        <position position="550"/>
    </location>
</feature>
<feature type="sequence variant" id="VAR_009199" description="In HLCS deficiency; almost no activity; dbSNP:rs119103228." evidence="3 16">
    <original>D</original>
    <variation>N</variation>
    <location>
        <position position="571"/>
    </location>
</feature>
<feature type="sequence variant" id="VAR_009200" description="In HLCS deficiency; &lt;10% activity; dbSNP:rs119103230." evidence="3 4 5 6">
    <original>G</original>
    <variation>S</variation>
    <location>
        <position position="581"/>
    </location>
</feature>
<feature type="sequence variant" id="VAR_021220" description="In HLCS deficiency; dbSNP:rs376899782." evidence="6">
    <original>G</original>
    <variation>R</variation>
    <location>
        <position position="582"/>
    </location>
</feature>
<feature type="sequence variant" id="VAR_009201" description="In HLCS deficiency; 14% of activity; shows elevated KM values for biotin (KM mutant) compared with that of the wild-type form." evidence="3 4 5">
    <location>
        <position position="610"/>
    </location>
</feature>
<feature type="sequence variant" id="VAR_046514" description="In HLCS deficiency." evidence="8">
    <original>D</original>
    <variation>Y</variation>
    <location>
        <position position="615"/>
    </location>
</feature>
<feature type="sequence variant" id="VAR_046515" description="In HLCS deficiency; dbSNP:rs149399432." evidence="7">
    <original>D</original>
    <variation>N</variation>
    <location>
        <position position="634"/>
    </location>
</feature>
<feature type="sequence variant" id="VAR_046516" description="In HLCS deficiency; 12% activity." evidence="5">
    <original>D</original>
    <variation>Y</variation>
    <location>
        <position position="634"/>
    </location>
</feature>
<feature type="sequence variant" id="VAR_046517" description="In HLCS deficiency." evidence="8">
    <original>D</original>
    <variation>G</variation>
    <location>
        <position position="715"/>
    </location>
</feature>
<feature type="sequence conflict" description="In Ref. 5; AK307940." evidence="18" ref="5">
    <original>P</original>
    <variation>T</variation>
    <location>
        <position position="209"/>
    </location>
</feature>
<feature type="sequence conflict" description="In Ref. 5; BAG36868." evidence="18" ref="5">
    <original>K</original>
    <variation>R</variation>
    <location>
        <position position="463"/>
    </location>
</feature>
<feature type="sequence conflict" description="In Ref. 2; BAA13332." evidence="18" ref="2">
    <original>E</original>
    <variation>K</variation>
    <location>
        <position position="558"/>
    </location>
</feature>
<name>BPL1_HUMAN</name>
<reference key="1">
    <citation type="journal article" date="1994" name="Nat. Genet.">
        <title>Isolation and characterization of mutations in the human holocarboxylase synthetase cDNA.</title>
        <authorList>
            <person name="Suzuki Y."/>
            <person name="Aoki Y."/>
            <person name="Ishida Y."/>
            <person name="Chiba Y."/>
            <person name="Iwamatsu A."/>
            <person name="Kishino T."/>
            <person name="Niikawa N."/>
            <person name="Matsubara Y."/>
            <person name="Narisawa K."/>
        </authorList>
    </citation>
    <scope>NUCLEOTIDE SEQUENCE [MRNA]</scope>
    <scope>VARIANT HLCS DEFICIENCY PRO-237</scope>
    <scope>FUNCTION</scope>
    <scope>SUBUNIT</scope>
    <scope>SUBCELLULAR LOCATION</scope>
    <scope>TISSUE SPECIFICITY</scope>
    <source>
        <tissue>Liver</tissue>
    </source>
</reference>
<reference key="2">
    <citation type="journal article" date="1997" name="Genome Res.">
        <title>Gene identification in 1.6-Mb region of the Down syndrome region on chromosome 21.</title>
        <authorList>
            <person name="Ohira M."/>
            <person name="Seki N."/>
            <person name="Nagase T."/>
            <person name="Suzuki E."/>
            <person name="Nomura N."/>
            <person name="Ohara O."/>
            <person name="Hattori M."/>
            <person name="Sakaki Y."/>
            <person name="Eki T."/>
            <person name="Murakami Y."/>
            <person name="Saito T."/>
            <person name="Ichikawa H."/>
            <person name="Ohki M."/>
        </authorList>
    </citation>
    <scope>NUCLEOTIDE SEQUENCE [MRNA]</scope>
    <source>
        <tissue>Bone marrow</tissue>
    </source>
</reference>
<reference key="3">
    <citation type="submission" date="1999-11" db="EMBL/GenBank/DDBJ databases">
        <title>Genomic sequencing of 1.2-Mb region on human chromosome 21q22.2.</title>
        <authorList>
            <person name="Shibuya K."/>
            <person name="Kudoh J."/>
            <person name="Minoshima S."/>
            <person name="Kawasaki K."/>
            <person name="Nakatoh E."/>
            <person name="Shintani A."/>
            <person name="Asakawa S."/>
            <person name="Shimizu N."/>
        </authorList>
    </citation>
    <scope>NUCLEOTIDE SEQUENCE [GENOMIC DNA]</scope>
</reference>
<reference key="4">
    <citation type="journal article" date="2001" name="Hum. Genet.">
        <title>Structure of human holocarboxylase synthetase gene and mutation spectrum of holocarboxylase synthetase deficiency.</title>
        <authorList>
            <person name="Yang X."/>
            <person name="Aoki Y."/>
            <person name="Li X."/>
            <person name="Sakamoto O."/>
            <person name="Hiratsuka M."/>
            <person name="Kure S."/>
            <person name="Taheri S."/>
            <person name="Christensen E."/>
            <person name="Inui K."/>
            <person name="Kubota M."/>
            <person name="Ohira M."/>
            <person name="Ohki M."/>
            <person name="Kudoh J."/>
            <person name="Kawasaki K."/>
            <person name="Shibuya K."/>
            <person name="Shintani A."/>
            <person name="Asakawa S."/>
            <person name="Minoshima S."/>
            <person name="Shimizu N."/>
            <person name="Narisawa K."/>
            <person name="Matsubara Y."/>
            <person name="Suzuki Y."/>
        </authorList>
    </citation>
    <scope>NUCLEOTIDE SEQUENCE [GENOMIC DNA]</scope>
    <scope>VARIANTS HLCS DEFICIENCY ASP-42; PRO-237; GLU-333; SER-360; CYS-456; SER-470; TRP-508; GLY-547; MET-550; SER-581; THR-610 DEL AND TYR-634</scope>
    <scope>CHARACTERIZATION OF VARIANTS HLCS DEFICIENCY ASP-42; SER-360; CYS-456; SER-470; GLY-547 AND TYR-634</scope>
</reference>
<reference key="5">
    <citation type="journal article" date="2004" name="Nat. Genet.">
        <title>Complete sequencing and characterization of 21,243 full-length human cDNAs.</title>
        <authorList>
            <person name="Ota T."/>
            <person name="Suzuki Y."/>
            <person name="Nishikawa T."/>
            <person name="Otsuki T."/>
            <person name="Sugiyama T."/>
            <person name="Irie R."/>
            <person name="Wakamatsu A."/>
            <person name="Hayashi K."/>
            <person name="Sato H."/>
            <person name="Nagai K."/>
            <person name="Kimura K."/>
            <person name="Makita H."/>
            <person name="Sekine M."/>
            <person name="Obayashi M."/>
            <person name="Nishi T."/>
            <person name="Shibahara T."/>
            <person name="Tanaka T."/>
            <person name="Ishii S."/>
            <person name="Yamamoto J."/>
            <person name="Saito K."/>
            <person name="Kawai Y."/>
            <person name="Isono Y."/>
            <person name="Nakamura Y."/>
            <person name="Nagahari K."/>
            <person name="Murakami K."/>
            <person name="Yasuda T."/>
            <person name="Iwayanagi T."/>
            <person name="Wagatsuma M."/>
            <person name="Shiratori A."/>
            <person name="Sudo H."/>
            <person name="Hosoiri T."/>
            <person name="Kaku Y."/>
            <person name="Kodaira H."/>
            <person name="Kondo H."/>
            <person name="Sugawara M."/>
            <person name="Takahashi M."/>
            <person name="Kanda K."/>
            <person name="Yokoi T."/>
            <person name="Furuya T."/>
            <person name="Kikkawa E."/>
            <person name="Omura Y."/>
            <person name="Abe K."/>
            <person name="Kamihara K."/>
            <person name="Katsuta N."/>
            <person name="Sato K."/>
            <person name="Tanikawa M."/>
            <person name="Yamazaki M."/>
            <person name="Ninomiya K."/>
            <person name="Ishibashi T."/>
            <person name="Yamashita H."/>
            <person name="Murakawa K."/>
            <person name="Fujimori K."/>
            <person name="Tanai H."/>
            <person name="Kimata M."/>
            <person name="Watanabe M."/>
            <person name="Hiraoka S."/>
            <person name="Chiba Y."/>
            <person name="Ishida S."/>
            <person name="Ono Y."/>
            <person name="Takiguchi S."/>
            <person name="Watanabe S."/>
            <person name="Yosida M."/>
            <person name="Hotuta T."/>
            <person name="Kusano J."/>
            <person name="Kanehori K."/>
            <person name="Takahashi-Fujii A."/>
            <person name="Hara H."/>
            <person name="Tanase T.-O."/>
            <person name="Nomura Y."/>
            <person name="Togiya S."/>
            <person name="Komai F."/>
            <person name="Hara R."/>
            <person name="Takeuchi K."/>
            <person name="Arita M."/>
            <person name="Imose N."/>
            <person name="Musashino K."/>
            <person name="Yuuki H."/>
            <person name="Oshima A."/>
            <person name="Sasaki N."/>
            <person name="Aotsuka S."/>
            <person name="Yoshikawa Y."/>
            <person name="Matsunawa H."/>
            <person name="Ichihara T."/>
            <person name="Shiohata N."/>
            <person name="Sano S."/>
            <person name="Moriya S."/>
            <person name="Momiyama H."/>
            <person name="Satoh N."/>
            <person name="Takami S."/>
            <person name="Terashima Y."/>
            <person name="Suzuki O."/>
            <person name="Nakagawa S."/>
            <person name="Senoh A."/>
            <person name="Mizoguchi H."/>
            <person name="Goto Y."/>
            <person name="Shimizu F."/>
            <person name="Wakebe H."/>
            <person name="Hishigaki H."/>
            <person name="Watanabe T."/>
            <person name="Sugiyama A."/>
            <person name="Takemoto M."/>
            <person name="Kawakami B."/>
            <person name="Yamazaki M."/>
            <person name="Watanabe K."/>
            <person name="Kumagai A."/>
            <person name="Itakura S."/>
            <person name="Fukuzumi Y."/>
            <person name="Fujimori Y."/>
            <person name="Komiyama M."/>
            <person name="Tashiro H."/>
            <person name="Tanigami A."/>
            <person name="Fujiwara T."/>
            <person name="Ono T."/>
            <person name="Yamada K."/>
            <person name="Fujii Y."/>
            <person name="Ozaki K."/>
            <person name="Hirao M."/>
            <person name="Ohmori Y."/>
            <person name="Kawabata A."/>
            <person name="Hikiji T."/>
            <person name="Kobatake N."/>
            <person name="Inagaki H."/>
            <person name="Ikema Y."/>
            <person name="Okamoto S."/>
            <person name="Okitani R."/>
            <person name="Kawakami T."/>
            <person name="Noguchi S."/>
            <person name="Itoh T."/>
            <person name="Shigeta K."/>
            <person name="Senba T."/>
            <person name="Matsumura K."/>
            <person name="Nakajima Y."/>
            <person name="Mizuno T."/>
            <person name="Morinaga M."/>
            <person name="Sasaki M."/>
            <person name="Togashi T."/>
            <person name="Oyama M."/>
            <person name="Hata H."/>
            <person name="Watanabe M."/>
            <person name="Komatsu T."/>
            <person name="Mizushima-Sugano J."/>
            <person name="Satoh T."/>
            <person name="Shirai Y."/>
            <person name="Takahashi Y."/>
            <person name="Nakagawa K."/>
            <person name="Okumura K."/>
            <person name="Nagase T."/>
            <person name="Nomura N."/>
            <person name="Kikuchi H."/>
            <person name="Masuho Y."/>
            <person name="Yamashita R."/>
            <person name="Nakai K."/>
            <person name="Yada T."/>
            <person name="Nakamura Y."/>
            <person name="Ohara O."/>
            <person name="Isogai T."/>
            <person name="Sugano S."/>
        </authorList>
    </citation>
    <scope>NUCLEOTIDE SEQUENCE [LARGE SCALE MRNA]</scope>
    <source>
        <tissue>Thalamus</tissue>
        <tissue>Tongue</tissue>
    </source>
</reference>
<reference key="6">
    <citation type="journal article" date="2000" name="Nature">
        <title>The DNA sequence of human chromosome 21.</title>
        <authorList>
            <person name="Hattori M."/>
            <person name="Fujiyama A."/>
            <person name="Taylor T.D."/>
            <person name="Watanabe H."/>
            <person name="Yada T."/>
            <person name="Park H.-S."/>
            <person name="Toyoda A."/>
            <person name="Ishii K."/>
            <person name="Totoki Y."/>
            <person name="Choi D.-K."/>
            <person name="Groner Y."/>
            <person name="Soeda E."/>
            <person name="Ohki M."/>
            <person name="Takagi T."/>
            <person name="Sakaki Y."/>
            <person name="Taudien S."/>
            <person name="Blechschmidt K."/>
            <person name="Polley A."/>
            <person name="Menzel U."/>
            <person name="Delabar J."/>
            <person name="Kumpf K."/>
            <person name="Lehmann R."/>
            <person name="Patterson D."/>
            <person name="Reichwald K."/>
            <person name="Rump A."/>
            <person name="Schillhabel M."/>
            <person name="Schudy A."/>
            <person name="Zimmermann W."/>
            <person name="Rosenthal A."/>
            <person name="Kudoh J."/>
            <person name="Shibuya K."/>
            <person name="Kawasaki K."/>
            <person name="Asakawa S."/>
            <person name="Shintani A."/>
            <person name="Sasaki T."/>
            <person name="Nagamine K."/>
            <person name="Mitsuyama S."/>
            <person name="Antonarakis S.E."/>
            <person name="Minoshima S."/>
            <person name="Shimizu N."/>
            <person name="Nordsiek G."/>
            <person name="Hornischer K."/>
            <person name="Brandt P."/>
            <person name="Scharfe M."/>
            <person name="Schoen O."/>
            <person name="Desario A."/>
            <person name="Reichelt J."/>
            <person name="Kauer G."/>
            <person name="Bloecker H."/>
            <person name="Ramser J."/>
            <person name="Beck A."/>
            <person name="Klages S."/>
            <person name="Hennig S."/>
            <person name="Riesselmann L."/>
            <person name="Dagand E."/>
            <person name="Wehrmeyer S."/>
            <person name="Borzym K."/>
            <person name="Gardiner K."/>
            <person name="Nizetic D."/>
            <person name="Francis F."/>
            <person name="Lehrach H."/>
            <person name="Reinhardt R."/>
            <person name="Yaspo M.-L."/>
        </authorList>
    </citation>
    <scope>NUCLEOTIDE SEQUENCE [LARGE SCALE GENOMIC DNA]</scope>
</reference>
<reference key="7">
    <citation type="submission" date="2005-09" db="EMBL/GenBank/DDBJ databases">
        <authorList>
            <person name="Mural R.J."/>
            <person name="Istrail S."/>
            <person name="Sutton G.G."/>
            <person name="Florea L."/>
            <person name="Halpern A.L."/>
            <person name="Mobarry C.M."/>
            <person name="Lippert R."/>
            <person name="Walenz B."/>
            <person name="Shatkay H."/>
            <person name="Dew I."/>
            <person name="Miller J.R."/>
            <person name="Flanigan M.J."/>
            <person name="Edwards N.J."/>
            <person name="Bolanos R."/>
            <person name="Fasulo D."/>
            <person name="Halldorsson B.V."/>
            <person name="Hannenhalli S."/>
            <person name="Turner R."/>
            <person name="Yooseph S."/>
            <person name="Lu F."/>
            <person name="Nusskern D.R."/>
            <person name="Shue B.C."/>
            <person name="Zheng X.H."/>
            <person name="Zhong F."/>
            <person name="Delcher A.L."/>
            <person name="Huson D.H."/>
            <person name="Kravitz S.A."/>
            <person name="Mouchard L."/>
            <person name="Reinert K."/>
            <person name="Remington K.A."/>
            <person name="Clark A.G."/>
            <person name="Waterman M.S."/>
            <person name="Eichler E.E."/>
            <person name="Adams M.D."/>
            <person name="Hunkapiller M.W."/>
            <person name="Myers E.W."/>
            <person name="Venter J.C."/>
        </authorList>
    </citation>
    <scope>NUCLEOTIDE SEQUENCE [LARGE SCALE GENOMIC DNA]</scope>
</reference>
<reference key="8">
    <citation type="journal article" date="2004" name="Genome Res.">
        <title>The status, quality, and expansion of the NIH full-length cDNA project: the Mammalian Gene Collection (MGC).</title>
        <authorList>
            <consortium name="The MGC Project Team"/>
        </authorList>
    </citation>
    <scope>NUCLEOTIDE SEQUENCE [LARGE SCALE MRNA]</scope>
    <source>
        <tissue>Placenta</tissue>
    </source>
</reference>
<reference key="9">
    <citation type="journal article" date="1998" name="Genomics">
        <title>Transcriptional map of the 2.5-Mb CBR-ERG region of chromosome 21 involved in Down syndrome.</title>
        <authorList>
            <person name="Dahmane N."/>
            <person name="Ait-Ghezala G."/>
            <person name="Gosset P."/>
            <person name="Chamoun Z."/>
            <person name="Dufresne-Zacharia M.-C."/>
            <person name="Lopes C."/>
            <person name="Rabatel N."/>
            <person name="Gassanova-Maugenre S."/>
            <person name="Chettouh Z."/>
            <person name="Abramowski V."/>
            <person name="Fayet E."/>
            <person name="Yaspo M.-L."/>
            <person name="Korn B."/>
            <person name="Blouin J.-L."/>
            <person name="Lehrach H."/>
            <person name="Poustka A."/>
            <person name="Antonarakis S.E."/>
            <person name="Sinet P.-M."/>
            <person name="Creau N."/>
            <person name="Delabar J.-M."/>
        </authorList>
    </citation>
    <scope>NUCLEOTIDE SEQUENCE [MRNA] OF 1-92</scope>
    <source>
        <tissue>Brain</tissue>
    </source>
</reference>
<reference key="10">
    <citation type="journal article" date="1995" name="Proc. Natl. Acad. Sci. U.S.A.">
        <title>Isolation of a cDNA encoding human holocarboxylase synthetase by functional complementation of a biotin auxotroph of Escherichia coli.</title>
        <authorList>
            <person name="Leon-Del-Rio A."/>
            <person name="Leclerc D."/>
            <person name="Akerman B."/>
            <person name="Wakamatsu N."/>
            <person name="Gravel R.A."/>
        </authorList>
    </citation>
    <scope>FUNCTION</scope>
    <scope>CATALYTIC ACTIVITY</scope>
    <scope>TISSUE SPECIFICITY</scope>
</reference>
<reference key="11">
    <citation type="journal article" date="2008" name="Proc. Natl. Acad. Sci. U.S.A.">
        <title>A quantitative atlas of mitotic phosphorylation.</title>
        <authorList>
            <person name="Dephoure N."/>
            <person name="Zhou C."/>
            <person name="Villen J."/>
            <person name="Beausoleil S.A."/>
            <person name="Bakalarski C.E."/>
            <person name="Elledge S.J."/>
            <person name="Gygi S.P."/>
        </authorList>
    </citation>
    <scope>PHOSPHORYLATION [LARGE SCALE ANALYSIS] AT SER-147</scope>
    <scope>IDENTIFICATION BY MASS SPECTROMETRY [LARGE SCALE ANALYSIS]</scope>
    <source>
        <tissue>Cervix carcinoma</tissue>
    </source>
</reference>
<reference key="12">
    <citation type="journal article" date="2011" name="BMC Syst. Biol.">
        <title>Initial characterization of the human central proteome.</title>
        <authorList>
            <person name="Burkard T.R."/>
            <person name="Planyavsky M."/>
            <person name="Kaupe I."/>
            <person name="Breitwieser F.P."/>
            <person name="Buerckstuemmer T."/>
            <person name="Bennett K.L."/>
            <person name="Superti-Furga G."/>
            <person name="Colinge J."/>
        </authorList>
    </citation>
    <scope>IDENTIFICATION BY MASS SPECTROMETRY [LARGE SCALE ANALYSIS]</scope>
</reference>
<reference key="13">
    <citation type="journal article" date="2013" name="J. Proteome Res.">
        <title>Toward a comprehensive characterization of a human cancer cell phosphoproteome.</title>
        <authorList>
            <person name="Zhou H."/>
            <person name="Di Palma S."/>
            <person name="Preisinger C."/>
            <person name="Peng M."/>
            <person name="Polat A.N."/>
            <person name="Heck A.J."/>
            <person name="Mohammed S."/>
        </authorList>
    </citation>
    <scope>PHOSPHORYLATION [LARGE SCALE ANALYSIS] AT SER-299</scope>
    <scope>IDENTIFICATION BY MASS SPECTROMETRY [LARGE SCALE ANALYSIS]</scope>
    <source>
        <tissue>Erythroleukemia</tissue>
    </source>
</reference>
<reference key="14">
    <citation type="journal article" date="2014" name="J. Proteomics">
        <title>An enzyme assisted RP-RPLC approach for in-depth analysis of human liver phosphoproteome.</title>
        <authorList>
            <person name="Bian Y."/>
            <person name="Song C."/>
            <person name="Cheng K."/>
            <person name="Dong M."/>
            <person name="Wang F."/>
            <person name="Huang J."/>
            <person name="Sun D."/>
            <person name="Wang L."/>
            <person name="Ye M."/>
            <person name="Zou H."/>
        </authorList>
    </citation>
    <scope>IDENTIFICATION BY MASS SPECTROMETRY [LARGE SCALE ANALYSIS]</scope>
    <source>
        <tissue>Liver</tissue>
    </source>
</reference>
<reference key="15">
    <citation type="journal article" date="1995" name="Biochim. Biophys. Acta">
        <title>Molecular analysis of holocarboxylase synthetase deficiency: a missense mutation and a single base deletion are predominant in Japanese patients.</title>
        <authorList>
            <person name="Aoki Y."/>
            <person name="Suzuki Y."/>
            <person name="Sakamoto O."/>
            <person name="Li X."/>
            <person name="Takahashi K."/>
            <person name="Ohtake A."/>
            <person name="Sakuta R."/>
            <person name="Ohura T."/>
            <person name="Miyabayashi S."/>
            <person name="Narisawa K."/>
        </authorList>
    </citation>
    <scope>VARIANT HLCS DEFICIENCY PRO-237</scope>
</reference>
<reference key="16">
    <citation type="journal article" date="1996" name="Hum. Mol. Genet.">
        <title>Clustering of mutations in the biotin-binding region of holocarboxylase synthetase in biotin-responsive multiple carboxylase deficiency.</title>
        <authorList>
            <person name="Dupuis L."/>
            <person name="Leon-Del-Rio A."/>
            <person name="Leclerc D."/>
            <person name="Campeau E."/>
            <person name="Sweetman L."/>
            <person name="Saudubray J.-M."/>
            <person name="Herman G."/>
            <person name="Gibson K.M."/>
            <person name="Gravel R.A."/>
        </authorList>
    </citation>
    <scope>VARIANTS HLCS DEFICIENCY ARG-216; ASP-363; TRP-508; GLU-518; MET-550 AND ASN-571</scope>
</reference>
<reference key="17">
    <citation type="journal article" date="1997" name="Pediatr. Res.">
        <title>Characterization of mutant holocarboxylase synthetase (HCS): a Km for biotin was not elevated in a patient with HCS deficiency.</title>
        <authorList>
            <person name="Aoki Y."/>
            <person name="Suzuki Y."/>
            <person name="Li X."/>
            <person name="Sakamoto O."/>
            <person name="Chikaoka H."/>
            <person name="Takita S."/>
            <person name="Narisawa K."/>
        </authorList>
    </citation>
    <scope>VARIANTS HLCS DEFICIENCY PRO-237 AND MET-550</scope>
</reference>
<reference key="18">
    <citation type="journal article" date="1999" name="Hum. Genet.">
        <title>Identification and characterization of mutations in patients with holocarboxylase synthetase deficiency.</title>
        <authorList>
            <person name="Aoki Y."/>
            <person name="Li X."/>
            <person name="Sakamoto O."/>
            <person name="Hiratsuka M."/>
            <person name="Akaishi H."/>
            <person name="Xu L."/>
            <person name="Briones P."/>
            <person name="Suormala T."/>
            <person name="Baumgartner E.R."/>
            <person name="Suzuki Y."/>
            <person name="Narisawa K."/>
        </authorList>
    </citation>
    <scope>VARIANTS HLCS DEFICIENCY GLU-333; ILE-462; ASN-571; SER-581 AND THR-610 DEL</scope>
</reference>
<reference key="19">
    <citation type="journal article" date="1999" name="Pediatr. Res.">
        <title>Relationship between kinetic properties of mutant enzyme and biochemical and clinical responsiveness to biotin in holocarboxylase synthetase deficiency.</title>
        <authorList>
            <person name="Sakamoto O."/>
            <person name="Suzuki Y."/>
            <person name="Li X."/>
            <person name="Aoki Y."/>
            <person name="Hiratsuka M."/>
            <person name="Suormala T."/>
            <person name="Baumgartner E.R."/>
            <person name="Gibson K.M."/>
            <person name="Narisawa K."/>
        </authorList>
    </citation>
    <scope>VARIANTS HLCS DEFICIENCY PRO-183; ARG-216; PRO-237; GLU-333; ASP-363; SER-581 AND THR-610 DEL</scope>
    <scope>CHARACTERIZATION OF VARIANTS HLCS DEFICIENCY PRO-183; ARG-216; PRO-237; GLU-333; ASP-363; SER-581 AND THR-610 DEL</scope>
    <scope>FUNCTION</scope>
    <scope>CATALYTIC ACTIVITY</scope>
    <scope>BIOPHYSICOCHEMICAL PROPERTIES</scope>
</reference>
<reference key="20">
    <citation type="journal article" date="2002" name="Am. J. Med. Genet.">
        <title>Clinical findings and biochemical and molecular analysis of four patients with holocarboxylase synthetase deficiency.</title>
        <authorList>
            <person name="Morrone A."/>
            <person name="Malvagia S."/>
            <person name="Donati M.A."/>
            <person name="Funghini S."/>
            <person name="Ciani F."/>
            <person name="Pela I."/>
            <person name="Boneh A."/>
            <person name="Peters H."/>
            <person name="Pasquini E."/>
            <person name="Zammarchi E."/>
        </authorList>
    </citation>
    <scope>VARIANTS HLCS DEFICIENCY ARG-216; LYS-511; SER-581 AND ARG-582</scope>
</reference>
<reference key="21">
    <citation type="journal article" date="2003" name="Clin. Biochem.">
        <title>A genomic approach to mutation analysis of holocarboxylase synthetase gene in three Chinese patients with late-onset holocarboxylase synthetase deficiency.</title>
        <authorList>
            <person name="Tang N.L.S."/>
            <person name="Hui J."/>
            <person name="Yong C.K.K."/>
            <person name="Wong L.T.K."/>
            <person name="Applegarth D.A."/>
            <person name="Vallance H.D."/>
            <person name="Law L.K."/>
            <person name="Fung S.L.M."/>
            <person name="Mak T.W.L."/>
            <person name="Sung Y.M."/>
            <person name="Cheung K.L."/>
            <person name="Fok T.F."/>
        </authorList>
    </citation>
    <scope>VARIANTS HLCS DEFICIENCY TRP-508; MET-550 AND ASN-634</scope>
</reference>
<reference key="22">
    <citation type="journal article" date="2005" name="Hum. Mutat.">
        <title>Mutations in the holocarboxylase synthetase gene HLCS.</title>
        <authorList>
            <person name="Suzuki Y."/>
            <person name="Yang X."/>
            <person name="Aoki Y."/>
            <person name="Kure S."/>
            <person name="Matsubara Y."/>
        </authorList>
    </citation>
    <scope>VARIANTS HLCS DEFICIENCY TYR-615 AND GLY-715</scope>
</reference>
<reference key="23">
    <citation type="journal article" date="2006" name="Science">
        <title>The consensus coding sequences of human breast and colorectal cancers.</title>
        <authorList>
            <person name="Sjoeblom T."/>
            <person name="Jones S."/>
            <person name="Wood L.D."/>
            <person name="Parsons D.W."/>
            <person name="Lin J."/>
            <person name="Barber T.D."/>
            <person name="Mandelker D."/>
            <person name="Leary R.J."/>
            <person name="Ptak J."/>
            <person name="Silliman N."/>
            <person name="Szabo S."/>
            <person name="Buckhaults P."/>
            <person name="Farrell C."/>
            <person name="Meeh P."/>
            <person name="Markowitz S.D."/>
            <person name="Willis J."/>
            <person name="Dawson D."/>
            <person name="Willson J.K.V."/>
            <person name="Gazdar A.F."/>
            <person name="Hartigan J."/>
            <person name="Wu L."/>
            <person name="Liu C."/>
            <person name="Parmigiani G."/>
            <person name="Park B.H."/>
            <person name="Bachman K.E."/>
            <person name="Papadopoulos N."/>
            <person name="Vogelstein B."/>
            <person name="Kinzler K.W."/>
            <person name="Velculescu V.E."/>
        </authorList>
    </citation>
    <scope>VARIANT [LARGE SCALE ANALYSIS] ASP-42</scope>
</reference>
<reference key="24">
    <citation type="journal article" date="2008" name="Hum. Mutat.">
        <title>Reduced half-life of holocarboxylase synthetase from patients with severe multiple carboxylase deficiency.</title>
        <authorList>
            <person name="Bailey L.M."/>
            <person name="Ivanov R.A."/>
            <person name="Jitrapakdee S."/>
            <person name="Wilson C.J."/>
            <person name="Wallace J.C."/>
            <person name="Polyak S.W."/>
        </authorList>
    </citation>
    <scope>CHARACTERIZATION OF VARIANT HLCS DEFICIENCY ARG-216</scope>
</reference>
<reference key="25">
    <citation type="journal article" date="2010" name="Clin. Genet.">
        <title>Holocarboxylase synthetase deficiency: novel clinical and molecular findings.</title>
        <authorList>
            <person name="Tammachote R."/>
            <person name="Janklat S."/>
            <person name="Tongkobpetch S."/>
            <person name="Suphapeetiporn K."/>
            <person name="Shotelersuk V."/>
        </authorList>
    </citation>
    <scope>VARIANTS HLCS DEFICIENCY ARG-505 AND TRP-508</scope>
</reference>
<reference key="26">
    <citation type="journal article" date="2015" name="JIMD Rep.">
        <title>Severe neonatal holocarboxylase synthetase deficiency in west african siblings.</title>
        <authorList>
            <person name="De Castro M."/>
            <person name="Zand D.J."/>
            <person name="Lichter-Konecki U."/>
            <person name="Kirmse B."/>
        </authorList>
    </citation>
    <scope>VARIANT HLCS DEFICIENCY TRP-241</scope>
</reference>
<dbReference type="EC" id="6.3.4.-" evidence="19"/>
<dbReference type="EC" id="6.3.4.9" evidence="19"/>
<dbReference type="EC" id="6.3.4.10" evidence="13"/>
<dbReference type="EC" id="6.3.4.11" evidence="19"/>
<dbReference type="EC" id="6.3.4.15" evidence="19"/>
<dbReference type="EMBL" id="D23672">
    <property type="protein sequence ID" value="BAA04902.1"/>
    <property type="molecule type" value="mRNA"/>
</dbReference>
<dbReference type="EMBL" id="D87328">
    <property type="protein sequence ID" value="BAA13332.1"/>
    <property type="molecule type" value="mRNA"/>
</dbReference>
<dbReference type="EMBL" id="AP000697">
    <property type="protein sequence ID" value="BAA89434.1"/>
    <property type="molecule type" value="Genomic_DNA"/>
</dbReference>
<dbReference type="EMBL" id="AP000703">
    <property type="protein sequence ID" value="BAA89434.1"/>
    <property type="status" value="JOINED"/>
    <property type="molecule type" value="Genomic_DNA"/>
</dbReference>
<dbReference type="EMBL" id="AP000701">
    <property type="protein sequence ID" value="BAA89434.1"/>
    <property type="status" value="JOINED"/>
    <property type="molecule type" value="Genomic_DNA"/>
</dbReference>
<dbReference type="EMBL" id="AP000698">
    <property type="protein sequence ID" value="BAA89434.1"/>
    <property type="status" value="JOINED"/>
    <property type="molecule type" value="Genomic_DNA"/>
</dbReference>
<dbReference type="EMBL" id="AB063285">
    <property type="protein sequence ID" value="BAB68550.1"/>
    <property type="molecule type" value="Genomic_DNA"/>
</dbReference>
<dbReference type="EMBL" id="AK307940">
    <property type="status" value="NOT_ANNOTATED_CDS"/>
    <property type="molecule type" value="mRNA"/>
</dbReference>
<dbReference type="EMBL" id="AK314189">
    <property type="protein sequence ID" value="BAG36868.1"/>
    <property type="molecule type" value="mRNA"/>
</dbReference>
<dbReference type="EMBL" id="AP001726">
    <property type="protein sequence ID" value="BAA95510.1"/>
    <property type="molecule type" value="Genomic_DNA"/>
</dbReference>
<dbReference type="EMBL" id="AP001727">
    <property type="protein sequence ID" value="BAA95511.1"/>
    <property type="molecule type" value="Genomic_DNA"/>
</dbReference>
<dbReference type="EMBL" id="CH471079">
    <property type="protein sequence ID" value="EAX09731.1"/>
    <property type="molecule type" value="Genomic_DNA"/>
</dbReference>
<dbReference type="EMBL" id="CH471079">
    <property type="protein sequence ID" value="EAX09732.1"/>
    <property type="molecule type" value="Genomic_DNA"/>
</dbReference>
<dbReference type="EMBL" id="BC060787">
    <property type="protein sequence ID" value="AAH60787.1"/>
    <property type="molecule type" value="mRNA"/>
</dbReference>
<dbReference type="EMBL" id="AJ001864">
    <property type="protein sequence ID" value="CAA05056.1"/>
    <property type="molecule type" value="mRNA"/>
</dbReference>
<dbReference type="CCDS" id="CCDS13647.1">
    <molecule id="P50747-1"/>
</dbReference>
<dbReference type="CCDS" id="CCDS93094.1">
    <molecule id="P50747-2"/>
</dbReference>
<dbReference type="PIR" id="S50833">
    <property type="entry name" value="S50833"/>
</dbReference>
<dbReference type="RefSeq" id="NP_000402.3">
    <molecule id="P50747-1"/>
    <property type="nucleotide sequence ID" value="NM_000411.6"/>
</dbReference>
<dbReference type="RefSeq" id="NP_001229713.1">
    <molecule id="P50747-1"/>
    <property type="nucleotide sequence ID" value="NM_001242784.3"/>
</dbReference>
<dbReference type="RefSeq" id="NP_001229714.1">
    <molecule id="P50747-1"/>
    <property type="nucleotide sequence ID" value="NM_001242785.2"/>
</dbReference>
<dbReference type="RefSeq" id="NP_001339443.1">
    <molecule id="P50747-2"/>
    <property type="nucleotide sequence ID" value="NM_001352514.2"/>
</dbReference>
<dbReference type="RefSeq" id="NP_001339444.1">
    <molecule id="P50747-1"/>
    <property type="nucleotide sequence ID" value="NM_001352515.2"/>
</dbReference>
<dbReference type="RefSeq" id="NP_001339445.1">
    <molecule id="P50747-1"/>
    <property type="nucleotide sequence ID" value="NM_001352516.2"/>
</dbReference>
<dbReference type="RefSeq" id="NP_001339446.1">
    <molecule id="P50747-1"/>
    <property type="nucleotide sequence ID" value="NM_001352517.1"/>
</dbReference>
<dbReference type="RefSeq" id="NP_001339447.1">
    <molecule id="P50747-1"/>
    <property type="nucleotide sequence ID" value="NM_001352518.2"/>
</dbReference>
<dbReference type="RefSeq" id="XP_005261012.1">
    <property type="nucleotide sequence ID" value="XM_005260955.3"/>
</dbReference>
<dbReference type="RefSeq" id="XP_005261013.1">
    <property type="nucleotide sequence ID" value="XM_005260956.3"/>
</dbReference>
<dbReference type="RefSeq" id="XP_006724057.1">
    <property type="nucleotide sequence ID" value="XM_006723994.2"/>
</dbReference>
<dbReference type="RefSeq" id="XP_006724058.1">
    <property type="nucleotide sequence ID" value="XM_006723995.1"/>
</dbReference>
<dbReference type="RefSeq" id="XP_011527840.1">
    <property type="nucleotide sequence ID" value="XM_011529538.1"/>
</dbReference>
<dbReference type="RefSeq" id="XP_011527841.1">
    <property type="nucleotide sequence ID" value="XM_011529539.2"/>
</dbReference>
<dbReference type="RefSeq" id="XP_011527843.1">
    <property type="nucleotide sequence ID" value="XM_011529541.2"/>
</dbReference>
<dbReference type="RefSeq" id="XP_016883819.1">
    <property type="nucleotide sequence ID" value="XM_017028330.1"/>
</dbReference>
<dbReference type="RefSeq" id="XP_047296710.1">
    <molecule id="P50747-1"/>
    <property type="nucleotide sequence ID" value="XM_047440754.1"/>
</dbReference>
<dbReference type="RefSeq" id="XP_054180427.1">
    <molecule id="P50747-1"/>
    <property type="nucleotide sequence ID" value="XM_054324452.1"/>
</dbReference>
<dbReference type="SMR" id="P50747"/>
<dbReference type="BioGRID" id="109386">
    <property type="interactions" value="44"/>
</dbReference>
<dbReference type="FunCoup" id="P50747">
    <property type="interactions" value="1479"/>
</dbReference>
<dbReference type="IntAct" id="P50747">
    <property type="interactions" value="27"/>
</dbReference>
<dbReference type="MINT" id="P50747"/>
<dbReference type="STRING" id="9606.ENSP00000382071"/>
<dbReference type="BindingDB" id="P50747"/>
<dbReference type="ChEMBL" id="CHEMBL2062354"/>
<dbReference type="DrugBank" id="DB00121">
    <property type="generic name" value="Biotin"/>
</dbReference>
<dbReference type="iPTMnet" id="P50747"/>
<dbReference type="PhosphoSitePlus" id="P50747"/>
<dbReference type="BioMuta" id="HLCS"/>
<dbReference type="DMDM" id="1705499"/>
<dbReference type="jPOST" id="P50747"/>
<dbReference type="MassIVE" id="P50747"/>
<dbReference type="PaxDb" id="9606-ENSP00000382071"/>
<dbReference type="PeptideAtlas" id="P50747"/>
<dbReference type="ProteomicsDB" id="56260"/>
<dbReference type="Pumba" id="P50747"/>
<dbReference type="Antibodypedia" id="8381">
    <property type="antibodies" value="156 antibodies from 23 providers"/>
</dbReference>
<dbReference type="DNASU" id="3141"/>
<dbReference type="Ensembl" id="ENST00000336648.8">
    <molecule id="P50747-1"/>
    <property type="protein sequence ID" value="ENSP00000338387.3"/>
    <property type="gene ID" value="ENSG00000159267.17"/>
</dbReference>
<dbReference type="Ensembl" id="ENST00000399120.5">
    <molecule id="P50747-1"/>
    <property type="protein sequence ID" value="ENSP00000382071.1"/>
    <property type="gene ID" value="ENSG00000159267.17"/>
</dbReference>
<dbReference type="Ensembl" id="ENST00000612277.4">
    <molecule id="P50747-1"/>
    <property type="protein sequence ID" value="ENSP00000479939.1"/>
    <property type="gene ID" value="ENSG00000159267.17"/>
</dbReference>
<dbReference type="Ensembl" id="ENST00000674895.3">
    <molecule id="P50747-2"/>
    <property type="protein sequence ID" value="ENSP00000502087.2"/>
    <property type="gene ID" value="ENSG00000159267.17"/>
</dbReference>
<dbReference type="Ensembl" id="ENST00000675307.1">
    <molecule id="P50747-1"/>
    <property type="protein sequence ID" value="ENSP00000501750.1"/>
    <property type="gene ID" value="ENSG00000159267.17"/>
</dbReference>
<dbReference type="GeneID" id="3141"/>
<dbReference type="KEGG" id="hsa:3141"/>
<dbReference type="MANE-Select" id="ENST00000674895.3">
    <molecule id="P50747-2"/>
    <property type="protein sequence ID" value="ENSP00000502087.2"/>
    <property type="RefSeq nucleotide sequence ID" value="NM_001352514.2"/>
    <property type="RefSeq protein sequence ID" value="NP_001339443.1"/>
</dbReference>
<dbReference type="UCSC" id="uc002yvs.4">
    <molecule id="P50747-1"/>
    <property type="organism name" value="human"/>
</dbReference>
<dbReference type="AGR" id="HGNC:4976"/>
<dbReference type="CTD" id="3141"/>
<dbReference type="DisGeNET" id="3141"/>
<dbReference type="GeneCards" id="HLCS"/>
<dbReference type="HGNC" id="HGNC:4976">
    <property type="gene designation" value="HLCS"/>
</dbReference>
<dbReference type="HPA" id="ENSG00000159267">
    <property type="expression patterns" value="Low tissue specificity"/>
</dbReference>
<dbReference type="MalaCards" id="HLCS"/>
<dbReference type="MIM" id="253270">
    <property type="type" value="phenotype"/>
</dbReference>
<dbReference type="MIM" id="609018">
    <property type="type" value="gene"/>
</dbReference>
<dbReference type="neXtProt" id="NX_P50747"/>
<dbReference type="OpenTargets" id="ENSG00000159267"/>
<dbReference type="Orphanet" id="79242">
    <property type="disease" value="Holocarboxylase synthetase deficiency"/>
</dbReference>
<dbReference type="PharmGKB" id="PA29310"/>
<dbReference type="VEuPathDB" id="HostDB:ENSG00000159267"/>
<dbReference type="eggNOG" id="KOG1536">
    <property type="taxonomic scope" value="Eukaryota"/>
</dbReference>
<dbReference type="GeneTree" id="ENSGT00390000002960"/>
<dbReference type="HOGENOM" id="CLU_006150_2_0_1"/>
<dbReference type="InParanoid" id="P50747"/>
<dbReference type="OMA" id="VEHCPLH"/>
<dbReference type="OrthoDB" id="10250105at2759"/>
<dbReference type="PAN-GO" id="P50747">
    <property type="GO annotations" value="3 GO annotations based on evolutionary models"/>
</dbReference>
<dbReference type="PhylomeDB" id="P50747"/>
<dbReference type="TreeFam" id="TF105860"/>
<dbReference type="PathwayCommons" id="P50747"/>
<dbReference type="Reactome" id="R-HSA-196780">
    <property type="pathway name" value="Biotin transport and metabolism"/>
</dbReference>
<dbReference type="Reactome" id="R-HSA-3371599">
    <property type="pathway name" value="Defective HLCS causes multiple carboxylase deficiency"/>
</dbReference>
<dbReference type="SABIO-RK" id="P50747"/>
<dbReference type="SignaLink" id="P50747"/>
<dbReference type="BioGRID-ORCS" id="3141">
    <property type="hits" value="31 hits in 1164 CRISPR screens"/>
</dbReference>
<dbReference type="ChiTaRS" id="HLCS">
    <property type="organism name" value="human"/>
</dbReference>
<dbReference type="GenomeRNAi" id="3141"/>
<dbReference type="Pharos" id="P50747">
    <property type="development level" value="Tchem"/>
</dbReference>
<dbReference type="PRO" id="PR:P50747"/>
<dbReference type="Proteomes" id="UP000005640">
    <property type="component" value="Chromosome 21"/>
</dbReference>
<dbReference type="RNAct" id="P50747">
    <property type="molecule type" value="protein"/>
</dbReference>
<dbReference type="Bgee" id="ENSG00000159267">
    <property type="expression patterns" value="Expressed in paraflocculus and 135 other cell types or tissues"/>
</dbReference>
<dbReference type="ExpressionAtlas" id="P50747">
    <property type="expression patterns" value="baseline and differential"/>
</dbReference>
<dbReference type="GO" id="GO:0000785">
    <property type="term" value="C:chromatin"/>
    <property type="evidence" value="ECO:0000314"/>
    <property type="project" value="UniProtKB"/>
</dbReference>
<dbReference type="GO" id="GO:0005737">
    <property type="term" value="C:cytoplasm"/>
    <property type="evidence" value="ECO:0000318"/>
    <property type="project" value="GO_Central"/>
</dbReference>
<dbReference type="GO" id="GO:0005829">
    <property type="term" value="C:cytosol"/>
    <property type="evidence" value="ECO:0000314"/>
    <property type="project" value="UniProtKB"/>
</dbReference>
<dbReference type="GO" id="GO:0005739">
    <property type="term" value="C:mitochondrion"/>
    <property type="evidence" value="ECO:0007669"/>
    <property type="project" value="UniProtKB-SubCell"/>
</dbReference>
<dbReference type="GO" id="GO:0005652">
    <property type="term" value="C:nuclear lamina"/>
    <property type="evidence" value="ECO:0000314"/>
    <property type="project" value="UniProtKB"/>
</dbReference>
<dbReference type="GO" id="GO:0016363">
    <property type="term" value="C:nuclear matrix"/>
    <property type="evidence" value="ECO:0000314"/>
    <property type="project" value="UniProtKB"/>
</dbReference>
<dbReference type="GO" id="GO:0005524">
    <property type="term" value="F:ATP binding"/>
    <property type="evidence" value="ECO:0007669"/>
    <property type="project" value="UniProtKB-KW"/>
</dbReference>
<dbReference type="GO" id="GO:0009374">
    <property type="term" value="F:biotin binding"/>
    <property type="evidence" value="ECO:0000314"/>
    <property type="project" value="UniProtKB"/>
</dbReference>
<dbReference type="GO" id="GO:0004077">
    <property type="term" value="F:biotin--[biotin carboxyl-carrier protein] ligase activity"/>
    <property type="evidence" value="ECO:0000314"/>
    <property type="project" value="UniProtKB"/>
</dbReference>
<dbReference type="GO" id="GO:0019899">
    <property type="term" value="F:enzyme binding"/>
    <property type="evidence" value="ECO:0000353"/>
    <property type="project" value="UniProtKB"/>
</dbReference>
<dbReference type="GO" id="GO:0042802">
    <property type="term" value="F:identical protein binding"/>
    <property type="evidence" value="ECO:0007669"/>
    <property type="project" value="Ensembl"/>
</dbReference>
<dbReference type="GO" id="GO:0006768">
    <property type="term" value="P:biotin metabolic process"/>
    <property type="evidence" value="ECO:0000304"/>
    <property type="project" value="Reactome"/>
</dbReference>
<dbReference type="GO" id="GO:0043687">
    <property type="term" value="P:post-translational protein modification"/>
    <property type="evidence" value="ECO:0000314"/>
    <property type="project" value="UniProtKB"/>
</dbReference>
<dbReference type="GO" id="GO:0070781">
    <property type="term" value="P:response to biotin"/>
    <property type="evidence" value="ECO:0000314"/>
    <property type="project" value="UniProtKB"/>
</dbReference>
<dbReference type="CDD" id="cd16442">
    <property type="entry name" value="BPL"/>
    <property type="match status" value="1"/>
</dbReference>
<dbReference type="FunFam" id="3.30.930.10:FF:000073">
    <property type="entry name" value="Biotin--protein ligase"/>
    <property type="match status" value="1"/>
</dbReference>
<dbReference type="Gene3D" id="3.30.930.10">
    <property type="entry name" value="Bira Bifunctional Protein, Domain 2"/>
    <property type="match status" value="1"/>
</dbReference>
<dbReference type="InterPro" id="IPR045864">
    <property type="entry name" value="aa-tRNA-synth_II/BPL/LPL"/>
</dbReference>
<dbReference type="InterPro" id="IPR004408">
    <property type="entry name" value="Biotin_CoA_COase_ligase"/>
</dbReference>
<dbReference type="InterPro" id="IPR003142">
    <property type="entry name" value="BPL_C"/>
</dbReference>
<dbReference type="InterPro" id="IPR004143">
    <property type="entry name" value="BPL_LPL_catalytic"/>
</dbReference>
<dbReference type="NCBIfam" id="TIGR00121">
    <property type="entry name" value="birA_ligase"/>
    <property type="match status" value="1"/>
</dbReference>
<dbReference type="PANTHER" id="PTHR12835">
    <property type="entry name" value="BIOTIN PROTEIN LIGASE"/>
    <property type="match status" value="1"/>
</dbReference>
<dbReference type="PANTHER" id="PTHR12835:SF5">
    <property type="entry name" value="BIOTIN--PROTEIN LIGASE"/>
    <property type="match status" value="1"/>
</dbReference>
<dbReference type="Pfam" id="PF02237">
    <property type="entry name" value="BPL_C"/>
    <property type="match status" value="1"/>
</dbReference>
<dbReference type="Pfam" id="PF03099">
    <property type="entry name" value="BPL_LplA_LipB"/>
    <property type="match status" value="1"/>
</dbReference>
<dbReference type="SUPFAM" id="SSF55681">
    <property type="entry name" value="Class II aaRS and biotin synthetases"/>
    <property type="match status" value="1"/>
</dbReference>
<dbReference type="PROSITE" id="PS51733">
    <property type="entry name" value="BPL_LPL_CATALYTIC"/>
    <property type="match status" value="1"/>
</dbReference>
<gene>
    <name evidence="21" type="primary">HLCS</name>
</gene>